<keyword id="KW-0002">3D-structure</keyword>
<keyword id="KW-0067">ATP-binding</keyword>
<keyword id="KW-0963">Cytoplasm</keyword>
<keyword id="KW-0378">Hydrolase</keyword>
<keyword id="KW-0547">Nucleotide-binding</keyword>
<keyword id="KW-0645">Protease</keyword>
<keyword id="KW-1185">Reference proteome</keyword>
<keyword id="KW-0720">Serine protease</keyword>
<keyword id="KW-0346">Stress response</keyword>
<dbReference type="EC" id="3.4.21.53"/>
<dbReference type="EMBL" id="U18229">
    <property type="protein sequence ID" value="AAA84744.1"/>
    <property type="molecule type" value="Genomic_DNA"/>
</dbReference>
<dbReference type="EMBL" id="Z75208">
    <property type="protein sequence ID" value="CAA99539.1"/>
    <property type="molecule type" value="Genomic_DNA"/>
</dbReference>
<dbReference type="EMBL" id="AL009126">
    <property type="protein sequence ID" value="CAB14781.1"/>
    <property type="molecule type" value="Genomic_DNA"/>
</dbReference>
<dbReference type="EMBL" id="X76424">
    <property type="protein sequence ID" value="CAA53987.1"/>
    <property type="molecule type" value="Genomic_DNA"/>
</dbReference>
<dbReference type="PIR" id="G69652">
    <property type="entry name" value="G69652"/>
</dbReference>
<dbReference type="RefSeq" id="NP_390699.1">
    <property type="nucleotide sequence ID" value="NC_000964.3"/>
</dbReference>
<dbReference type="RefSeq" id="WP_004398923.1">
    <property type="nucleotide sequence ID" value="NZ_OZ025638.1"/>
</dbReference>
<dbReference type="PDB" id="8DVH">
    <property type="method" value="X-ray"/>
    <property type="resolution" value="1.90 A"/>
    <property type="chains" value="A/B=347-552"/>
</dbReference>
<dbReference type="PDBsum" id="8DVH"/>
<dbReference type="SMR" id="P42425"/>
<dbReference type="FunCoup" id="P42425">
    <property type="interactions" value="35"/>
</dbReference>
<dbReference type="STRING" id="224308.BSU28210"/>
<dbReference type="MEROPS" id="S16.005"/>
<dbReference type="jPOST" id="P42425"/>
<dbReference type="PaxDb" id="224308-BSU28210"/>
<dbReference type="EnsemblBacteria" id="CAB14781">
    <property type="protein sequence ID" value="CAB14781"/>
    <property type="gene ID" value="BSU_28210"/>
</dbReference>
<dbReference type="GeneID" id="937484"/>
<dbReference type="KEGG" id="bsu:BSU28210"/>
<dbReference type="PATRIC" id="fig|224308.179.peg.3064"/>
<dbReference type="eggNOG" id="COG0470">
    <property type="taxonomic scope" value="Bacteria"/>
</dbReference>
<dbReference type="eggNOG" id="COG1067">
    <property type="taxonomic scope" value="Bacteria"/>
</dbReference>
<dbReference type="InParanoid" id="P42425"/>
<dbReference type="OrthoDB" id="2318150at2"/>
<dbReference type="PhylomeDB" id="P42425"/>
<dbReference type="BioCyc" id="BSUB:BSU28210-MONOMER"/>
<dbReference type="Proteomes" id="UP000001570">
    <property type="component" value="Chromosome"/>
</dbReference>
<dbReference type="GO" id="GO:0005737">
    <property type="term" value="C:cytoplasm"/>
    <property type="evidence" value="ECO:0007669"/>
    <property type="project" value="UniProtKB-SubCell"/>
</dbReference>
<dbReference type="GO" id="GO:0005524">
    <property type="term" value="F:ATP binding"/>
    <property type="evidence" value="ECO:0007669"/>
    <property type="project" value="UniProtKB-KW"/>
</dbReference>
<dbReference type="GO" id="GO:0016887">
    <property type="term" value="F:ATP hydrolysis activity"/>
    <property type="evidence" value="ECO:0007669"/>
    <property type="project" value="InterPro"/>
</dbReference>
<dbReference type="GO" id="GO:0004176">
    <property type="term" value="F:ATP-dependent peptidase activity"/>
    <property type="evidence" value="ECO:0007669"/>
    <property type="project" value="InterPro"/>
</dbReference>
<dbReference type="GO" id="GO:0004252">
    <property type="term" value="F:serine-type endopeptidase activity"/>
    <property type="evidence" value="ECO:0007669"/>
    <property type="project" value="UniProtKB-EC"/>
</dbReference>
<dbReference type="GO" id="GO:0030163">
    <property type="term" value="P:protein catabolic process"/>
    <property type="evidence" value="ECO:0007669"/>
    <property type="project" value="InterPro"/>
</dbReference>
<dbReference type="GO" id="GO:0006508">
    <property type="term" value="P:proteolysis"/>
    <property type="evidence" value="ECO:0007669"/>
    <property type="project" value="UniProtKB-KW"/>
</dbReference>
<dbReference type="CDD" id="cd00009">
    <property type="entry name" value="AAA"/>
    <property type="match status" value="1"/>
</dbReference>
<dbReference type="CDD" id="cd18139">
    <property type="entry name" value="HLD_clamp_RarA"/>
    <property type="match status" value="1"/>
</dbReference>
<dbReference type="Gene3D" id="3.30.230.10">
    <property type="match status" value="1"/>
</dbReference>
<dbReference type="Gene3D" id="3.40.50.300">
    <property type="entry name" value="P-loop containing nucleotide triphosphate hydrolases"/>
    <property type="match status" value="1"/>
</dbReference>
<dbReference type="InterPro" id="IPR003593">
    <property type="entry name" value="AAA+_ATPase"/>
</dbReference>
<dbReference type="InterPro" id="IPR008269">
    <property type="entry name" value="Lon_proteolytic"/>
</dbReference>
<dbReference type="InterPro" id="IPR027065">
    <property type="entry name" value="Lon_Prtase"/>
</dbReference>
<dbReference type="InterPro" id="IPR000523">
    <property type="entry name" value="Mg_chelatse_chII-like_cat_dom"/>
</dbReference>
<dbReference type="InterPro" id="IPR027417">
    <property type="entry name" value="P-loop_NTPase"/>
</dbReference>
<dbReference type="InterPro" id="IPR008268">
    <property type="entry name" value="Peptidase_S16_AS"/>
</dbReference>
<dbReference type="InterPro" id="IPR020568">
    <property type="entry name" value="Ribosomal_Su5_D2-typ_SF"/>
</dbReference>
<dbReference type="InterPro" id="IPR014721">
    <property type="entry name" value="Ribsml_uS5_D2-typ_fold_subgr"/>
</dbReference>
<dbReference type="InterPro" id="IPR014251">
    <property type="entry name" value="Spore_LonB"/>
</dbReference>
<dbReference type="NCBIfam" id="TIGR02902">
    <property type="entry name" value="spore_lonB"/>
    <property type="match status" value="1"/>
</dbReference>
<dbReference type="PANTHER" id="PTHR10046">
    <property type="entry name" value="ATP DEPENDENT LON PROTEASE FAMILY MEMBER"/>
    <property type="match status" value="1"/>
</dbReference>
<dbReference type="Pfam" id="PF05362">
    <property type="entry name" value="Lon_C"/>
    <property type="match status" value="1"/>
</dbReference>
<dbReference type="Pfam" id="PF01078">
    <property type="entry name" value="Mg_chelatase"/>
    <property type="match status" value="1"/>
</dbReference>
<dbReference type="PRINTS" id="PR00830">
    <property type="entry name" value="ENDOLAPTASE"/>
</dbReference>
<dbReference type="SMART" id="SM00382">
    <property type="entry name" value="AAA"/>
    <property type="match status" value="1"/>
</dbReference>
<dbReference type="SUPFAM" id="SSF52540">
    <property type="entry name" value="P-loop containing nucleoside triphosphate hydrolases"/>
    <property type="match status" value="1"/>
</dbReference>
<dbReference type="SUPFAM" id="SSF54211">
    <property type="entry name" value="Ribosomal protein S5 domain 2-like"/>
    <property type="match status" value="1"/>
</dbReference>
<dbReference type="PROSITE" id="PS51786">
    <property type="entry name" value="LON_PROTEOLYTIC"/>
    <property type="match status" value="1"/>
</dbReference>
<dbReference type="PROSITE" id="PS01046">
    <property type="entry name" value="LON_SER"/>
    <property type="match status" value="1"/>
</dbReference>
<comment type="function">
    <text evidence="1">ATP-dependent serine protease that mediates the selective degradation of mutant and abnormal proteins as well as certain short-lived regulatory proteins. Required for cellular homeostasis and for survival from DNA damage and developmental changes induced by stress. Degrades polypeptides processively to yield small peptide fragments that are 5 to 10 amino acids long. Binds to DNA in a double-stranded, site-specific manner (By similarity).</text>
</comment>
<comment type="catalytic activity">
    <reaction evidence="3">
        <text>Hydrolysis of proteins in presence of ATP.</text>
        <dbReference type="EC" id="3.4.21.53"/>
    </reaction>
</comment>
<comment type="subunit">
    <text evidence="1">Homohexamer. Organized in a ring with a central cavity (By similarity).</text>
</comment>
<comment type="subcellular location">
    <subcellularLocation>
        <location evidence="1">Cytoplasm</location>
    </subcellularLocation>
</comment>
<comment type="developmental stage">
    <text evidence="4">Restricted to the prespore compartment of sporulating cells.</text>
</comment>
<comment type="induction">
    <text evidence="1">By heat shock.</text>
</comment>
<comment type="similarity">
    <text evidence="2">Belongs to the peptidase S16 family.</text>
</comment>
<gene>
    <name type="primary">lon2</name>
    <name type="synonym">lonB</name>
    <name type="synonym">ysxF</name>
    <name type="ordered locus">BSU28210</name>
</gene>
<accession>P42425</accession>
<evidence type="ECO:0000250" key="1"/>
<evidence type="ECO:0000255" key="2">
    <source>
        <dbReference type="PROSITE-ProRule" id="PRU01122"/>
    </source>
</evidence>
<evidence type="ECO:0000255" key="3">
    <source>
        <dbReference type="PROSITE-ProRule" id="PRU10087"/>
    </source>
</evidence>
<evidence type="ECO:0000269" key="4">
    <source>
    </source>
</evidence>
<evidence type="ECO:0000305" key="5"/>
<evidence type="ECO:0007829" key="6">
    <source>
        <dbReference type="PDB" id="8DVH"/>
    </source>
</evidence>
<sequence>MSWTGIALFIQLFFGIIIGLYFWNLLKNQRTQKVTIDKESKKEMEQLRKMRAISLSEPLSEKVRPKSFKDIVGQEDGIKALKAALCGPNPQHVIVYGPPGVGKTAAARLVLEEAKKHKQSPFKEQAVFVELDATTARFDERGIADPLIGSVHDPIYQGAGAMGQAGIPQPKQGAVTHAHGGVLFIDEIGELHPIQMNKMLKVLEDRKVFLDSAYYSEENTQIPNHIHDIFQNGLPADFRLIGATTRMPNEIPPAIRSRCLEVFFRELEKDELKTVAKTAADKIEKNISEEGLDLLTSYTRNGREAVNMIQIAAGMAVTENRKDITIEDIEWVIHSSQLTPKHEQKIGVEPQVGIVNGLAVYGPNSGSLLEIEVSVTAAQDKGSINITGIAEEESIGSQSKSIRRKSMAKGSVENVLTVLRTMGMKPSDYDIHINFPGGIPIDGPSAGIAMAAGIFSAIHKIPIDNTVAMTGEISLNGLVKPIGGVIPKIKAAKQSGAKKVIIPYENQQAILKQIDGIEIIAVKTFQEVLDEILVNPPTEQKPFHIEINKESV</sequence>
<proteinExistence type="evidence at protein level"/>
<feature type="chain" id="PRO_0000076117" description="Lon protease 2">
    <location>
        <begin position="1"/>
        <end position="552"/>
    </location>
</feature>
<feature type="domain" description="Lon proteolytic" evidence="2">
    <location>
        <begin position="349"/>
        <end position="535"/>
    </location>
</feature>
<feature type="active site" evidence="3">
    <location>
        <position position="445"/>
    </location>
</feature>
<feature type="active site" evidence="3">
    <location>
        <position position="488"/>
    </location>
</feature>
<feature type="binding site" evidence="1">
    <location>
        <begin position="97"/>
        <end position="104"/>
    </location>
    <ligand>
        <name>ATP</name>
        <dbReference type="ChEBI" id="CHEBI:30616"/>
    </ligand>
</feature>
<feature type="sequence conflict" description="In Ref. 4; CAA53987." evidence="5" ref="4">
    <original>V</original>
    <variation>G</variation>
    <location>
        <position position="500"/>
    </location>
</feature>
<feature type="strand" evidence="6">
    <location>
        <begin position="353"/>
        <end position="361"/>
    </location>
</feature>
<feature type="turn" evidence="6">
    <location>
        <begin position="362"/>
        <end position="364"/>
    </location>
</feature>
<feature type="strand" evidence="6">
    <location>
        <begin position="365"/>
        <end position="377"/>
    </location>
</feature>
<feature type="strand" evidence="6">
    <location>
        <begin position="379"/>
        <end position="381"/>
    </location>
</feature>
<feature type="strand" evidence="6">
    <location>
        <begin position="383"/>
        <end position="389"/>
    </location>
</feature>
<feature type="strand" evidence="6">
    <location>
        <begin position="392"/>
        <end position="396"/>
    </location>
</feature>
<feature type="strand" evidence="6">
    <location>
        <begin position="398"/>
        <end position="405"/>
    </location>
</feature>
<feature type="helix" evidence="6">
    <location>
        <begin position="407"/>
        <end position="421"/>
    </location>
</feature>
<feature type="helix" evidence="6">
    <location>
        <begin position="426"/>
        <end position="428"/>
    </location>
</feature>
<feature type="strand" evidence="6">
    <location>
        <begin position="429"/>
        <end position="434"/>
    </location>
</feature>
<feature type="strand" evidence="6">
    <location>
        <begin position="437"/>
        <end position="439"/>
    </location>
</feature>
<feature type="helix" evidence="6">
    <location>
        <begin position="447"/>
        <end position="459"/>
    </location>
</feature>
<feature type="strand" evidence="6">
    <location>
        <begin position="467"/>
        <end position="469"/>
    </location>
</feature>
<feature type="strand" evidence="6">
    <location>
        <begin position="477"/>
        <end position="480"/>
    </location>
</feature>
<feature type="helix" evidence="6">
    <location>
        <begin position="485"/>
        <end position="494"/>
    </location>
</feature>
<feature type="strand" evidence="6">
    <location>
        <begin position="498"/>
        <end position="503"/>
    </location>
</feature>
<feature type="helix" evidence="6">
    <location>
        <begin position="504"/>
        <end position="506"/>
    </location>
</feature>
<feature type="helix" evidence="6">
    <location>
        <begin position="509"/>
        <end position="513"/>
    </location>
</feature>
<feature type="strand" evidence="6">
    <location>
        <begin position="516"/>
        <end position="524"/>
    </location>
</feature>
<feature type="helix" evidence="6">
    <location>
        <begin position="525"/>
        <end position="532"/>
    </location>
</feature>
<name>LON2_BACSU</name>
<organism>
    <name type="scientific">Bacillus subtilis (strain 168)</name>
    <dbReference type="NCBI Taxonomy" id="224308"/>
    <lineage>
        <taxon>Bacteria</taxon>
        <taxon>Bacillati</taxon>
        <taxon>Bacillota</taxon>
        <taxon>Bacilli</taxon>
        <taxon>Bacillales</taxon>
        <taxon>Bacillaceae</taxon>
        <taxon>Bacillus</taxon>
    </lineage>
</organism>
<protein>
    <recommendedName>
        <fullName>Lon protease 2</fullName>
        <ecNumber>3.4.21.53</ecNumber>
    </recommendedName>
    <alternativeName>
        <fullName>ATP-dependent protease La 2</fullName>
    </alternativeName>
</protein>
<reference key="1">
    <citation type="submission" date="1996-01" db="EMBL/GenBank/DDBJ databases">
        <authorList>
            <person name="Ye R."/>
            <person name="Wong S.L."/>
        </authorList>
    </citation>
    <scope>NUCLEOTIDE SEQUENCE [GENOMIC DNA]</scope>
    <source>
        <strain>168</strain>
    </source>
</reference>
<reference key="2">
    <citation type="journal article" date="1996" name="Microbiology">
        <title>The dnaB-pheA (256 degrees-240 degrees) region of the Bacillus subtilis chromosome containing genes responsible for stress responses, the utilization of plant cell walls and primary metabolism.</title>
        <authorList>
            <person name="Wipat A."/>
            <person name="Carter N."/>
            <person name="Brignell C.S."/>
            <person name="Guy J.B."/>
            <person name="Piper K."/>
            <person name="Sanders J."/>
            <person name="Emmerson P.T."/>
            <person name="Harwood C.R."/>
        </authorList>
    </citation>
    <scope>NUCLEOTIDE SEQUENCE [GENOMIC DNA]</scope>
    <source>
        <strain>168</strain>
    </source>
</reference>
<reference key="3">
    <citation type="journal article" date="1997" name="Nature">
        <title>The complete genome sequence of the Gram-positive bacterium Bacillus subtilis.</title>
        <authorList>
            <person name="Kunst F."/>
            <person name="Ogasawara N."/>
            <person name="Moszer I."/>
            <person name="Albertini A.M."/>
            <person name="Alloni G."/>
            <person name="Azevedo V."/>
            <person name="Bertero M.G."/>
            <person name="Bessieres P."/>
            <person name="Bolotin A."/>
            <person name="Borchert S."/>
            <person name="Borriss R."/>
            <person name="Boursier L."/>
            <person name="Brans A."/>
            <person name="Braun M."/>
            <person name="Brignell S.C."/>
            <person name="Bron S."/>
            <person name="Brouillet S."/>
            <person name="Bruschi C.V."/>
            <person name="Caldwell B."/>
            <person name="Capuano V."/>
            <person name="Carter N.M."/>
            <person name="Choi S.-K."/>
            <person name="Codani J.-J."/>
            <person name="Connerton I.F."/>
            <person name="Cummings N.J."/>
            <person name="Daniel R.A."/>
            <person name="Denizot F."/>
            <person name="Devine K.M."/>
            <person name="Duesterhoeft A."/>
            <person name="Ehrlich S.D."/>
            <person name="Emmerson P.T."/>
            <person name="Entian K.-D."/>
            <person name="Errington J."/>
            <person name="Fabret C."/>
            <person name="Ferrari E."/>
            <person name="Foulger D."/>
            <person name="Fritz C."/>
            <person name="Fujita M."/>
            <person name="Fujita Y."/>
            <person name="Fuma S."/>
            <person name="Galizzi A."/>
            <person name="Galleron N."/>
            <person name="Ghim S.-Y."/>
            <person name="Glaser P."/>
            <person name="Goffeau A."/>
            <person name="Golightly E.J."/>
            <person name="Grandi G."/>
            <person name="Guiseppi G."/>
            <person name="Guy B.J."/>
            <person name="Haga K."/>
            <person name="Haiech J."/>
            <person name="Harwood C.R."/>
            <person name="Henaut A."/>
            <person name="Hilbert H."/>
            <person name="Holsappel S."/>
            <person name="Hosono S."/>
            <person name="Hullo M.-F."/>
            <person name="Itaya M."/>
            <person name="Jones L.-M."/>
            <person name="Joris B."/>
            <person name="Karamata D."/>
            <person name="Kasahara Y."/>
            <person name="Klaerr-Blanchard M."/>
            <person name="Klein C."/>
            <person name="Kobayashi Y."/>
            <person name="Koetter P."/>
            <person name="Koningstein G."/>
            <person name="Krogh S."/>
            <person name="Kumano M."/>
            <person name="Kurita K."/>
            <person name="Lapidus A."/>
            <person name="Lardinois S."/>
            <person name="Lauber J."/>
            <person name="Lazarevic V."/>
            <person name="Lee S.-M."/>
            <person name="Levine A."/>
            <person name="Liu H."/>
            <person name="Masuda S."/>
            <person name="Mauel C."/>
            <person name="Medigue C."/>
            <person name="Medina N."/>
            <person name="Mellado R.P."/>
            <person name="Mizuno M."/>
            <person name="Moestl D."/>
            <person name="Nakai S."/>
            <person name="Noback M."/>
            <person name="Noone D."/>
            <person name="O'Reilly M."/>
            <person name="Ogawa K."/>
            <person name="Ogiwara A."/>
            <person name="Oudega B."/>
            <person name="Park S.-H."/>
            <person name="Parro V."/>
            <person name="Pohl T.M."/>
            <person name="Portetelle D."/>
            <person name="Porwollik S."/>
            <person name="Prescott A.M."/>
            <person name="Presecan E."/>
            <person name="Pujic P."/>
            <person name="Purnelle B."/>
            <person name="Rapoport G."/>
            <person name="Rey M."/>
            <person name="Reynolds S."/>
            <person name="Rieger M."/>
            <person name="Rivolta C."/>
            <person name="Rocha E."/>
            <person name="Roche B."/>
            <person name="Rose M."/>
            <person name="Sadaie Y."/>
            <person name="Sato T."/>
            <person name="Scanlan E."/>
            <person name="Schleich S."/>
            <person name="Schroeter R."/>
            <person name="Scoffone F."/>
            <person name="Sekiguchi J."/>
            <person name="Sekowska A."/>
            <person name="Seror S.J."/>
            <person name="Serror P."/>
            <person name="Shin B.-S."/>
            <person name="Soldo B."/>
            <person name="Sorokin A."/>
            <person name="Tacconi E."/>
            <person name="Takagi T."/>
            <person name="Takahashi H."/>
            <person name="Takemaru K."/>
            <person name="Takeuchi M."/>
            <person name="Tamakoshi A."/>
            <person name="Tanaka T."/>
            <person name="Terpstra P."/>
            <person name="Tognoni A."/>
            <person name="Tosato V."/>
            <person name="Uchiyama S."/>
            <person name="Vandenbol M."/>
            <person name="Vannier F."/>
            <person name="Vassarotti A."/>
            <person name="Viari A."/>
            <person name="Wambutt R."/>
            <person name="Wedler E."/>
            <person name="Wedler H."/>
            <person name="Weitzenegger T."/>
            <person name="Winters P."/>
            <person name="Wipat A."/>
            <person name="Yamamoto H."/>
            <person name="Yamane K."/>
            <person name="Yasumoto K."/>
            <person name="Yata K."/>
            <person name="Yoshida K."/>
            <person name="Yoshikawa H.-F."/>
            <person name="Zumstein E."/>
            <person name="Yoshikawa H."/>
            <person name="Danchin A."/>
        </authorList>
    </citation>
    <scope>NUCLEOTIDE SEQUENCE [LARGE SCALE GENOMIC DNA]</scope>
    <source>
        <strain>168</strain>
    </source>
</reference>
<reference key="4">
    <citation type="journal article" date="1994" name="J. Bacteriol.">
        <title>Cloning, nucleotide sequence, and expression of the Bacillus subtilis lon gene.</title>
        <authorList>
            <person name="Riethdorf S."/>
            <person name="Voelker U."/>
            <person name="Gerth U."/>
            <person name="Winkler A."/>
            <person name="Engelmann S."/>
            <person name="Hecker M."/>
        </authorList>
    </citation>
    <scope>NUCLEOTIDE SEQUENCE [GENOMIC DNA] OF 499-552</scope>
    <source>
        <strain>168 / IS58</strain>
    </source>
</reference>
<reference key="5">
    <citation type="journal article" date="2001" name="J. Bacteriol.">
        <title>Forespore-specific transcription of the lonB gene during sporulation in Bacillus subtilis.</title>
        <authorList>
            <person name="Serrano M."/>
            <person name="Hoevel S."/>
            <person name="Moran C.P. Jr."/>
            <person name="Henriques A.O."/>
            <person name="Voelker U."/>
        </authorList>
    </citation>
    <scope>DEVELOPMENTAL STAGE</scope>
</reference>